<gene>
    <name type="primary">BAIAP2</name>
</gene>
<feature type="chain" id="PRO_0000064815" description="BAR/IMD domain-containing adapter protein 2">
    <location>
        <begin position="1"/>
        <end position="521"/>
    </location>
</feature>
<feature type="domain" description="IMD" evidence="6">
    <location>
        <begin position="1"/>
        <end position="250"/>
    </location>
</feature>
<feature type="domain" description="SH3" evidence="5">
    <location>
        <begin position="375"/>
        <end position="438"/>
    </location>
</feature>
<feature type="region of interest" description="Disordered" evidence="7">
    <location>
        <begin position="299"/>
        <end position="370"/>
    </location>
</feature>
<feature type="region of interest" description="Disordered" evidence="7">
    <location>
        <begin position="445"/>
        <end position="480"/>
    </location>
</feature>
<feature type="coiled-coil region" evidence="4">
    <location>
        <begin position="132"/>
        <end position="153"/>
    </location>
</feature>
<feature type="compositionally biased region" description="Low complexity" evidence="7">
    <location>
        <begin position="321"/>
        <end position="335"/>
    </location>
</feature>
<feature type="compositionally biased region" description="Polar residues" evidence="7">
    <location>
        <begin position="349"/>
        <end position="368"/>
    </location>
</feature>
<feature type="compositionally biased region" description="Polar residues" evidence="7">
    <location>
        <begin position="447"/>
        <end position="458"/>
    </location>
</feature>
<feature type="modified residue" description="Phosphoserine" evidence="3">
    <location>
        <position position="262"/>
    </location>
</feature>
<feature type="modified residue" description="Phosphoserine" evidence="3">
    <location>
        <position position="324"/>
    </location>
</feature>
<feature type="modified residue" description="Phosphoserine" evidence="3">
    <location>
        <position position="326"/>
    </location>
</feature>
<feature type="modified residue" description="Phosphoserine" evidence="3">
    <location>
        <position position="337"/>
    </location>
</feature>
<feature type="modified residue" description="Phosphothreonine" evidence="3">
    <location>
        <position position="341"/>
    </location>
</feature>
<feature type="modified residue" description="Phosphoserine" evidence="3">
    <location>
        <position position="347"/>
    </location>
</feature>
<feature type="modified residue" description="Phosphothreonine" evidence="3">
    <location>
        <position position="361"/>
    </location>
</feature>
<feature type="modified residue" description="Phosphoserine" evidence="3">
    <location>
        <position position="367"/>
    </location>
</feature>
<feature type="modified residue" description="Phosphoserine" evidence="3">
    <location>
        <position position="385"/>
    </location>
</feature>
<feature type="modified residue" description="Phosphoserine" evidence="2">
    <location>
        <position position="396"/>
    </location>
</feature>
<feature type="modified residue" description="Phosphoserine" evidence="3">
    <location>
        <position position="455"/>
    </location>
</feature>
<evidence type="ECO:0000250" key="1"/>
<evidence type="ECO:0000250" key="2">
    <source>
        <dbReference type="UniProtKB" id="Q8BKX1"/>
    </source>
</evidence>
<evidence type="ECO:0000250" key="3">
    <source>
        <dbReference type="UniProtKB" id="Q9UQB8"/>
    </source>
</evidence>
<evidence type="ECO:0000255" key="4"/>
<evidence type="ECO:0000255" key="5">
    <source>
        <dbReference type="PROSITE-ProRule" id="PRU00192"/>
    </source>
</evidence>
<evidence type="ECO:0000255" key="6">
    <source>
        <dbReference type="PROSITE-ProRule" id="PRU00668"/>
    </source>
</evidence>
<evidence type="ECO:0000256" key="7">
    <source>
        <dbReference type="SAM" id="MobiDB-lite"/>
    </source>
</evidence>
<evidence type="ECO:0000269" key="8">
    <source>
    </source>
</evidence>
<comment type="function">
    <text evidence="1">Adapter protein that links membrane-bound small G-proteins to cytoplasmic effector proteins. Necessary for CDC42-mediated reorganization of the actin cytoskeleton and for RAC1-mediated membrane ruffling. Involved in the regulation of the actin cytoskeleton by WASF family members and the Arp2/3 complex. Plays a role in neurite growth. Acts syngeristically with ENAH to promote filipodia formation. Plays a role in the reorganization of the actin cytoskeleton in response to bacterial infection. Participates in actin bundling when associated with EPS8, promoting filopodial protrusions (By similarity).</text>
</comment>
<comment type="subunit">
    <text evidence="1">Homodimer. Interacts with CDC42 and RAC1 that have been activated by GTP binding. Interacts with ATN1, ADGRB1, DIAPH1, EPS8, SHANK1, SHANK2, SHANK3, TIAM1, WASF1 and WASF2. Interacts with ENAH after recruitment of CDC42 (By similarity).</text>
</comment>
<comment type="interaction">
    <interactant intactId="EBI-7010040">
        <id>Q60437</id>
    </interactant>
    <interactant intactId="EBI-745080">
        <id>Q9NZQ3</id>
        <label>NCKIPSD</label>
    </interactant>
    <organismsDiffer>true</organismsDiffer>
    <experiments>3</experiments>
</comment>
<comment type="subcellular location">
    <subcellularLocation>
        <location evidence="1">Cytoplasm</location>
    </subcellularLocation>
    <subcellularLocation>
        <location evidence="1">Membrane</location>
        <topology evidence="1">Peripheral membrane protein</topology>
    </subcellularLocation>
    <subcellularLocation>
        <location evidence="1">Cell projection</location>
        <location evidence="1">Filopodium</location>
    </subcellularLocation>
    <subcellularLocation>
        <location evidence="1">Cell projection</location>
        <location evidence="1">Ruffle</location>
    </subcellularLocation>
    <subcellularLocation>
        <location evidence="1">Cytoplasm</location>
        <location evidence="1">Cytoskeleton</location>
    </subcellularLocation>
    <text evidence="1">Detected throughout the cytoplasm in the absence of specific binding partners. Detected in filopodia and close to membrane ruffles. Recruited to actin pedestals that are formed upon infection by bacteria at bacterial attachment sites (By similarity).</text>
</comment>
<comment type="domain">
    <text evidence="1">The IMD domain forms a coiled coil. The isolated domain can induce actin bundling and filopodia formation. In the absence of G-proteins intramolecular interaction between the IMD and the SH3 domain gives rise to an auto-inhibited state of the protein. Interaction of the IMD with RAC1 or CDC42 leads to activation (By similarity).</text>
</comment>
<comment type="domain">
    <text evidence="1">The SH3 domain interacts with ATN1, ADGRB1, WASF1, WASF2, SHANK1, DIAPH1 and ENAH.</text>
</comment>
<comment type="PTM">
    <text evidence="8">Phosphorylated on tyrosine residues by INSR in response to insulin treatment.</text>
</comment>
<sequence length="521" mass="57639">MSLSRSEEMHRLTENVYKTIMEQFNPSLRNFIAMGKNYEKALAGVTFAAKGYFDALVKMGELASESQGSKELGDVLFQMAEVHRQIQNQLEEMLKSFHNELLTQLEQKVELDSRYLSAALKKYQAEQRSKGDALDKCQAELKKLRKKSQGSKNPQKYSDKELQYIDAISNKQGELENYVSDGYKTALTEERRRFCFLVEKQCAVAKNSAAYHSKGKELLAQKLPVWQQACADPNKIPDRAVQLMQQIASSNGSILPSTLSASKSNLVISDPIPGAKPLPVPPELAPFVGRMSAQENVPVMNGVAGPDSEDYNPWADRKAAQPKSLSPPQSQSKLSDSYSNTLPVRKSVTPKNSYATTENKTLPRSSSMAAGLERNGRMRVKAIFSHAAGDNSTLLSFKEGDLITLLVPEARDGWHYGESEKTKMRGWFPFSYTRVLDSDGSDRLHMSLQQGKSSSTGNLLDKDDLAVPPPDYGTSSRAFPTQTAGTFKQRPYSVAVPAFSQGLDDYGARSVSSADVEVARF</sequence>
<reference key="1">
    <citation type="journal article" date="1996" name="J. Biol. Chem.">
        <title>Characterization and cloning of a 58/53-kDa substrate of the insulin receptor tyrosine kinase.</title>
        <authorList>
            <person name="Yeh T.C."/>
            <person name="Ogawa W."/>
            <person name="Danielsen A.G."/>
            <person name="Roth R.A."/>
        </authorList>
    </citation>
    <scope>NUCLEOTIDE SEQUENCE [MRNA]</scope>
    <scope>PROTEIN SEQUENCE OF 71-84 AND 264-285</scope>
    <scope>PHOSPHORYLATION AT TYROSINE RESIDUES</scope>
    <source>
        <tissue>Ovary</tissue>
    </source>
</reference>
<proteinExistence type="evidence at protein level"/>
<protein>
    <recommendedName>
        <fullName evidence="3">BAR/IMD domain-containing adapter protein 2</fullName>
    </recommendedName>
    <alternativeName>
        <fullName>Brain-specific angiogenesis inhibitor 1-associated protein 2</fullName>
        <shortName>BAI-associated protein 2</shortName>
        <shortName>BAI1-associated protein 2</shortName>
    </alternativeName>
    <alternativeName>
        <fullName>Insulin receptor substrate protein of 53 kDa</fullName>
        <shortName>IRSp53</shortName>
        <shortName>Insulin receptor substrate p53</shortName>
    </alternativeName>
    <alternativeName>
        <fullName>Insulin receptor tyrosine kinase 53 kDa substrate</fullName>
    </alternativeName>
    <alternativeName>
        <fullName>p58/p53</fullName>
    </alternativeName>
</protein>
<organism>
    <name type="scientific">Cricetulus griseus</name>
    <name type="common">Chinese hamster</name>
    <name type="synonym">Cricetulus barabensis griseus</name>
    <dbReference type="NCBI Taxonomy" id="10029"/>
    <lineage>
        <taxon>Eukaryota</taxon>
        <taxon>Metazoa</taxon>
        <taxon>Chordata</taxon>
        <taxon>Craniata</taxon>
        <taxon>Vertebrata</taxon>
        <taxon>Euteleostomi</taxon>
        <taxon>Mammalia</taxon>
        <taxon>Eutheria</taxon>
        <taxon>Euarchontoglires</taxon>
        <taxon>Glires</taxon>
        <taxon>Rodentia</taxon>
        <taxon>Myomorpha</taxon>
        <taxon>Muroidea</taxon>
        <taxon>Cricetidae</taxon>
        <taxon>Cricetinae</taxon>
        <taxon>Cricetulus</taxon>
    </lineage>
</organism>
<dbReference type="EMBL" id="U41899">
    <property type="protein sequence ID" value="AAC52436.1"/>
    <property type="molecule type" value="mRNA"/>
</dbReference>
<dbReference type="SMR" id="Q60437"/>
<dbReference type="IntAct" id="Q60437">
    <property type="interactions" value="1"/>
</dbReference>
<dbReference type="MINT" id="Q60437"/>
<dbReference type="Ensembl" id="ENSCGRT00001000832.1">
    <property type="protein sequence ID" value="ENSCGRP00001000808.1"/>
    <property type="gene ID" value="ENSCGRG00001000617.1"/>
</dbReference>
<dbReference type="eggNOG" id="ENOG502QUM6">
    <property type="taxonomic scope" value="Eukaryota"/>
</dbReference>
<dbReference type="GeneTree" id="ENSGT00940000153560"/>
<dbReference type="Proteomes" id="UP000694386">
    <property type="component" value="Unplaced"/>
</dbReference>
<dbReference type="Proteomes" id="UP001108280">
    <property type="component" value="Unplaced"/>
</dbReference>
<dbReference type="GO" id="GO:0005856">
    <property type="term" value="C:cytoskeleton"/>
    <property type="evidence" value="ECO:0007669"/>
    <property type="project" value="UniProtKB-SubCell"/>
</dbReference>
<dbReference type="GO" id="GO:0005829">
    <property type="term" value="C:cytosol"/>
    <property type="evidence" value="ECO:0000250"/>
    <property type="project" value="UniProtKB"/>
</dbReference>
<dbReference type="GO" id="GO:0030175">
    <property type="term" value="C:filopodium"/>
    <property type="evidence" value="ECO:0007669"/>
    <property type="project" value="UniProtKB-SubCell"/>
</dbReference>
<dbReference type="GO" id="GO:0016020">
    <property type="term" value="C:membrane"/>
    <property type="evidence" value="ECO:0007669"/>
    <property type="project" value="UniProtKB-SubCell"/>
</dbReference>
<dbReference type="GO" id="GO:0005654">
    <property type="term" value="C:nucleoplasm"/>
    <property type="evidence" value="ECO:0007669"/>
    <property type="project" value="TreeGrafter"/>
</dbReference>
<dbReference type="GO" id="GO:0001726">
    <property type="term" value="C:ruffle"/>
    <property type="evidence" value="ECO:0007669"/>
    <property type="project" value="UniProtKB-SubCell"/>
</dbReference>
<dbReference type="GO" id="GO:0008093">
    <property type="term" value="F:cytoskeletal anchor activity"/>
    <property type="evidence" value="ECO:0007669"/>
    <property type="project" value="InterPro"/>
</dbReference>
<dbReference type="GO" id="GO:0070064">
    <property type="term" value="F:proline-rich region binding"/>
    <property type="evidence" value="ECO:0000250"/>
    <property type="project" value="UniProtKB"/>
</dbReference>
<dbReference type="GO" id="GO:0051764">
    <property type="term" value="P:actin crosslink formation"/>
    <property type="evidence" value="ECO:0000250"/>
    <property type="project" value="UniProtKB"/>
</dbReference>
<dbReference type="GO" id="GO:0051017">
    <property type="term" value="P:actin filament bundle assembly"/>
    <property type="evidence" value="ECO:0000250"/>
    <property type="project" value="UniProtKB"/>
</dbReference>
<dbReference type="GO" id="GO:0007009">
    <property type="term" value="P:plasma membrane organization"/>
    <property type="evidence" value="ECO:0007669"/>
    <property type="project" value="InterPro"/>
</dbReference>
<dbReference type="GO" id="GO:0030838">
    <property type="term" value="P:positive regulation of actin filament polymerization"/>
    <property type="evidence" value="ECO:0007669"/>
    <property type="project" value="TreeGrafter"/>
</dbReference>
<dbReference type="GO" id="GO:0032956">
    <property type="term" value="P:regulation of actin cytoskeleton organization"/>
    <property type="evidence" value="ECO:0000250"/>
    <property type="project" value="UniProtKB"/>
</dbReference>
<dbReference type="GO" id="GO:0008360">
    <property type="term" value="P:regulation of cell shape"/>
    <property type="evidence" value="ECO:0000250"/>
    <property type="project" value="UniProtKB"/>
</dbReference>
<dbReference type="CDD" id="cd07646">
    <property type="entry name" value="I-BAR_IMD_IRSp53"/>
    <property type="match status" value="1"/>
</dbReference>
<dbReference type="CDD" id="cd11915">
    <property type="entry name" value="SH3_Irsp53"/>
    <property type="match status" value="1"/>
</dbReference>
<dbReference type="FunFam" id="1.20.1270.60:FF:000011">
    <property type="entry name" value="Brain-specific angiogenesis inhibitor 1-associated protein 2"/>
    <property type="match status" value="1"/>
</dbReference>
<dbReference type="FunFam" id="2.30.30.40:FF:000018">
    <property type="entry name" value="Brain-specific angiogenesis inhibitor 1-associated protein 2"/>
    <property type="match status" value="1"/>
</dbReference>
<dbReference type="Gene3D" id="1.20.1270.60">
    <property type="entry name" value="Arfaptin homology (AH) domain/BAR domain"/>
    <property type="match status" value="1"/>
</dbReference>
<dbReference type="Gene3D" id="2.30.30.40">
    <property type="entry name" value="SH3 Domains"/>
    <property type="match status" value="1"/>
</dbReference>
<dbReference type="InterPro" id="IPR027267">
    <property type="entry name" value="AH/BAR_dom_sf"/>
</dbReference>
<dbReference type="InterPro" id="IPR030128">
    <property type="entry name" value="BAIP2_I-BAR_dom"/>
</dbReference>
<dbReference type="InterPro" id="IPR035594">
    <property type="entry name" value="BAIP2_SH3"/>
</dbReference>
<dbReference type="InterPro" id="IPR013606">
    <property type="entry name" value="I-BAR_dom"/>
</dbReference>
<dbReference type="InterPro" id="IPR027681">
    <property type="entry name" value="IRSp53/IRTKS/Pinkbar"/>
</dbReference>
<dbReference type="InterPro" id="IPR036028">
    <property type="entry name" value="SH3-like_dom_sf"/>
</dbReference>
<dbReference type="InterPro" id="IPR001452">
    <property type="entry name" value="SH3_domain"/>
</dbReference>
<dbReference type="PANTHER" id="PTHR14206">
    <property type="entry name" value="BRAIN-SPECIFIC ANGIOGENESIS INHIBITOR 1-ASSOCIATED PROTEIN 2"/>
    <property type="match status" value="1"/>
</dbReference>
<dbReference type="PANTHER" id="PTHR14206:SF3">
    <property type="entry name" value="BRAIN-SPECIFIC ANGIOGENESIS INHIBITOR 1-ASSOCIATED PROTEIN 2"/>
    <property type="match status" value="1"/>
</dbReference>
<dbReference type="Pfam" id="PF08397">
    <property type="entry name" value="IMD"/>
    <property type="match status" value="1"/>
</dbReference>
<dbReference type="Pfam" id="PF07653">
    <property type="entry name" value="SH3_2"/>
    <property type="match status" value="1"/>
</dbReference>
<dbReference type="SMART" id="SM00326">
    <property type="entry name" value="SH3"/>
    <property type="match status" value="1"/>
</dbReference>
<dbReference type="SUPFAM" id="SSF103657">
    <property type="entry name" value="BAR/IMD domain-like"/>
    <property type="match status" value="1"/>
</dbReference>
<dbReference type="SUPFAM" id="SSF50044">
    <property type="entry name" value="SH3-domain"/>
    <property type="match status" value="1"/>
</dbReference>
<dbReference type="PROSITE" id="PS51338">
    <property type="entry name" value="IMD"/>
    <property type="match status" value="1"/>
</dbReference>
<dbReference type="PROSITE" id="PS50002">
    <property type="entry name" value="SH3"/>
    <property type="match status" value="1"/>
</dbReference>
<keyword id="KW-0966">Cell projection</keyword>
<keyword id="KW-0175">Coiled coil</keyword>
<keyword id="KW-0963">Cytoplasm</keyword>
<keyword id="KW-0206">Cytoskeleton</keyword>
<keyword id="KW-0903">Direct protein sequencing</keyword>
<keyword id="KW-0472">Membrane</keyword>
<keyword id="KW-0597">Phosphoprotein</keyword>
<keyword id="KW-0728">SH3 domain</keyword>
<accession>Q60437</accession>
<name>BAIP2_CRIGR</name>